<protein>
    <recommendedName>
        <fullName>Histone deacetylase 9</fullName>
        <shortName>HD9</shortName>
        <ecNumber>3.5.1.98</ecNumber>
    </recommendedName>
    <alternativeName>
        <fullName>Histone deacetylase 7B</fullName>
        <shortName>HD7b</shortName>
    </alternativeName>
    <alternativeName>
        <fullName>Histone deacetylase-related protein</fullName>
    </alternativeName>
    <alternativeName>
        <fullName>MEF2-interacting transcription repressor MITR</fullName>
    </alternativeName>
</protein>
<dbReference type="EC" id="3.5.1.98"/>
<dbReference type="EMBL" id="AF324492">
    <property type="protein sequence ID" value="AAG48332.1"/>
    <property type="molecule type" value="mRNA"/>
</dbReference>
<dbReference type="EMBL" id="AF235053">
    <property type="protein sequence ID" value="AAK15027.1"/>
    <property type="molecule type" value="mRNA"/>
</dbReference>
<dbReference type="EMBL" id="AF279371">
    <property type="protein sequence ID" value="AAL86358.1"/>
    <property type="molecule type" value="mRNA"/>
</dbReference>
<dbReference type="EMBL" id="BC098187">
    <property type="protein sequence ID" value="AAH98187.1"/>
    <property type="molecule type" value="mRNA"/>
</dbReference>
<dbReference type="CCDS" id="CCDS36432.1">
    <molecule id="Q99N13-1"/>
</dbReference>
<dbReference type="RefSeq" id="NP_077038.2">
    <property type="nucleotide sequence ID" value="NM_024124.3"/>
</dbReference>
<dbReference type="PDB" id="1TQE">
    <property type="method" value="X-ray"/>
    <property type="resolution" value="2.70 A"/>
    <property type="chains" value="X/Y=139-158"/>
</dbReference>
<dbReference type="PDBsum" id="1TQE"/>
<dbReference type="SMR" id="Q99N13"/>
<dbReference type="BioGRID" id="219748">
    <property type="interactions" value="9"/>
</dbReference>
<dbReference type="CORUM" id="Q99N13"/>
<dbReference type="DIP" id="DIP-41905N"/>
<dbReference type="ELM" id="Q99N13"/>
<dbReference type="FunCoup" id="Q99N13">
    <property type="interactions" value="183"/>
</dbReference>
<dbReference type="IntAct" id="Q99N13">
    <property type="interactions" value="9"/>
</dbReference>
<dbReference type="STRING" id="10090.ENSMUSP00000106443"/>
<dbReference type="BindingDB" id="Q99N13"/>
<dbReference type="ChEMBL" id="CHEMBL3832944"/>
<dbReference type="GlyGen" id="Q99N13">
    <property type="glycosylation" value="1 site, 1 N-linked glycan (1 site)"/>
</dbReference>
<dbReference type="iPTMnet" id="Q99N13"/>
<dbReference type="PhosphoSitePlus" id="Q99N13"/>
<dbReference type="jPOST" id="Q99N13"/>
<dbReference type="PaxDb" id="10090-ENSMUSP00000106443"/>
<dbReference type="PeptideAtlas" id="Q99N13"/>
<dbReference type="ProteomicsDB" id="271500">
    <molecule id="Q99N13-1"/>
</dbReference>
<dbReference type="ProteomicsDB" id="271501">
    <molecule id="Q99N13-2"/>
</dbReference>
<dbReference type="ProteomicsDB" id="271502">
    <molecule id="Q99N13-3"/>
</dbReference>
<dbReference type="DNASU" id="79221"/>
<dbReference type="GeneID" id="79221"/>
<dbReference type="KEGG" id="mmu:79221"/>
<dbReference type="UCSC" id="uc007nja.1">
    <molecule id="Q99N13-3"/>
    <property type="organism name" value="mouse"/>
</dbReference>
<dbReference type="UCSC" id="uc007njb.1">
    <molecule id="Q99N13-2"/>
    <property type="organism name" value="mouse"/>
</dbReference>
<dbReference type="UCSC" id="uc007njc.2">
    <molecule id="Q99N13-1"/>
    <property type="organism name" value="mouse"/>
</dbReference>
<dbReference type="AGR" id="MGI:1931221"/>
<dbReference type="CTD" id="9734"/>
<dbReference type="MGI" id="MGI:1931221">
    <property type="gene designation" value="Hdac9"/>
</dbReference>
<dbReference type="eggNOG" id="KOG1343">
    <property type="taxonomic scope" value="Eukaryota"/>
</dbReference>
<dbReference type="InParanoid" id="Q99N13"/>
<dbReference type="OrthoDB" id="5232919at2759"/>
<dbReference type="PhylomeDB" id="Q99N13"/>
<dbReference type="TreeFam" id="TF106174"/>
<dbReference type="BioGRID-ORCS" id="79221">
    <property type="hits" value="1 hit in 50 CRISPR screens"/>
</dbReference>
<dbReference type="ChiTaRS" id="Hdac9">
    <property type="organism name" value="mouse"/>
</dbReference>
<dbReference type="EvolutionaryTrace" id="Q99N13"/>
<dbReference type="PRO" id="PR:Q99N13"/>
<dbReference type="Proteomes" id="UP000000589">
    <property type="component" value="Unplaced"/>
</dbReference>
<dbReference type="RNAct" id="Q99N13">
    <property type="molecule type" value="protein"/>
</dbReference>
<dbReference type="GO" id="GO:0005737">
    <property type="term" value="C:cytoplasm"/>
    <property type="evidence" value="ECO:0000304"/>
    <property type="project" value="UniProtKB"/>
</dbReference>
<dbReference type="GO" id="GO:0000118">
    <property type="term" value="C:histone deacetylase complex"/>
    <property type="evidence" value="ECO:0000304"/>
    <property type="project" value="UniProtKB"/>
</dbReference>
<dbReference type="GO" id="GO:0035097">
    <property type="term" value="C:histone methyltransferase complex"/>
    <property type="evidence" value="ECO:0000314"/>
    <property type="project" value="BHF-UCL"/>
</dbReference>
<dbReference type="GO" id="GO:0005634">
    <property type="term" value="C:nucleus"/>
    <property type="evidence" value="ECO:0000304"/>
    <property type="project" value="UniProtKB"/>
</dbReference>
<dbReference type="GO" id="GO:0140297">
    <property type="term" value="F:DNA-binding transcription factor binding"/>
    <property type="evidence" value="ECO:0000353"/>
    <property type="project" value="BHF-UCL"/>
</dbReference>
<dbReference type="GO" id="GO:0004407">
    <property type="term" value="F:histone deacetylase activity"/>
    <property type="evidence" value="ECO:0000304"/>
    <property type="project" value="UniProtKB"/>
</dbReference>
<dbReference type="GO" id="GO:0031078">
    <property type="term" value="F:histone H3K14 deacetylase activity, hydrolytic mechanism"/>
    <property type="evidence" value="ECO:0000315"/>
    <property type="project" value="ARUK-UCL"/>
</dbReference>
<dbReference type="GO" id="GO:0032129">
    <property type="term" value="F:histone H3K9 deacetylase activity, hydrolytic mechanism"/>
    <property type="evidence" value="ECO:0000315"/>
    <property type="project" value="ARUK-UCL"/>
</dbReference>
<dbReference type="GO" id="GO:0003714">
    <property type="term" value="F:transcription corepressor activity"/>
    <property type="evidence" value="ECO:0000314"/>
    <property type="project" value="MGI"/>
</dbReference>
<dbReference type="GO" id="GO:0042113">
    <property type="term" value="P:B cell activation"/>
    <property type="evidence" value="ECO:0000304"/>
    <property type="project" value="UniProtKB"/>
</dbReference>
<dbReference type="GO" id="GO:0030183">
    <property type="term" value="P:B cell differentiation"/>
    <property type="evidence" value="ECO:0000304"/>
    <property type="project" value="UniProtKB"/>
</dbReference>
<dbReference type="GO" id="GO:0006325">
    <property type="term" value="P:chromatin organization"/>
    <property type="evidence" value="ECO:0000304"/>
    <property type="project" value="UniProtKB"/>
</dbReference>
<dbReference type="GO" id="GO:0008340">
    <property type="term" value="P:determination of adult lifespan"/>
    <property type="evidence" value="ECO:0000316"/>
    <property type="project" value="MGI"/>
</dbReference>
<dbReference type="GO" id="GO:0006281">
    <property type="term" value="P:DNA repair"/>
    <property type="evidence" value="ECO:0000316"/>
    <property type="project" value="MGI"/>
</dbReference>
<dbReference type="GO" id="GO:0007507">
    <property type="term" value="P:heart development"/>
    <property type="evidence" value="ECO:0000316"/>
    <property type="project" value="MGI"/>
</dbReference>
<dbReference type="GO" id="GO:0006954">
    <property type="term" value="P:inflammatory response"/>
    <property type="evidence" value="ECO:0000304"/>
    <property type="project" value="UniProtKB"/>
</dbReference>
<dbReference type="GO" id="GO:0045892">
    <property type="term" value="P:negative regulation of DNA-templated transcription"/>
    <property type="evidence" value="ECO:0000314"/>
    <property type="project" value="MGI"/>
</dbReference>
<dbReference type="GO" id="GO:0045814">
    <property type="term" value="P:negative regulation of gene expression, epigenetic"/>
    <property type="evidence" value="ECO:0000315"/>
    <property type="project" value="ARUK-UCL"/>
</dbReference>
<dbReference type="GO" id="GO:0045843">
    <property type="term" value="P:negative regulation of striated muscle tissue development"/>
    <property type="evidence" value="ECO:0000304"/>
    <property type="project" value="UniProtKB"/>
</dbReference>
<dbReference type="GO" id="GO:0000122">
    <property type="term" value="P:negative regulation of transcription by RNA polymerase II"/>
    <property type="evidence" value="ECO:0000314"/>
    <property type="project" value="MGI"/>
</dbReference>
<dbReference type="GO" id="GO:0007399">
    <property type="term" value="P:nervous system development"/>
    <property type="evidence" value="ECO:0000304"/>
    <property type="project" value="UniProtKB"/>
</dbReference>
<dbReference type="GO" id="GO:0048742">
    <property type="term" value="P:regulation of skeletal muscle fiber development"/>
    <property type="evidence" value="ECO:0000316"/>
    <property type="project" value="MGI"/>
</dbReference>
<dbReference type="GO" id="GO:1902809">
    <property type="term" value="P:regulation of skeletal muscle fiber differentiation"/>
    <property type="evidence" value="ECO:0000316"/>
    <property type="project" value="MGI"/>
</dbReference>
<dbReference type="Gene3D" id="6.10.250.1550">
    <property type="match status" value="1"/>
</dbReference>
<dbReference type="IDEAL" id="IID50025"/>
<dbReference type="InterPro" id="IPR024643">
    <property type="entry name" value="Hist_deacetylase_Gln_rich_N"/>
</dbReference>
<dbReference type="PANTHER" id="PTHR45364:SF11">
    <property type="entry name" value="HISTONE DEACETYLASE 9"/>
    <property type="match status" value="1"/>
</dbReference>
<dbReference type="PANTHER" id="PTHR45364">
    <property type="entry name" value="HISTONE DEACETYLASE 9-RELATED"/>
    <property type="match status" value="1"/>
</dbReference>
<dbReference type="Pfam" id="PF12203">
    <property type="entry name" value="HDAC4_Gln"/>
    <property type="match status" value="1"/>
</dbReference>
<organism>
    <name type="scientific">Mus musculus</name>
    <name type="common">Mouse</name>
    <dbReference type="NCBI Taxonomy" id="10090"/>
    <lineage>
        <taxon>Eukaryota</taxon>
        <taxon>Metazoa</taxon>
        <taxon>Chordata</taxon>
        <taxon>Craniata</taxon>
        <taxon>Vertebrata</taxon>
        <taxon>Euteleostomi</taxon>
        <taxon>Mammalia</taxon>
        <taxon>Eutheria</taxon>
        <taxon>Euarchontoglires</taxon>
        <taxon>Glires</taxon>
        <taxon>Rodentia</taxon>
        <taxon>Myomorpha</taxon>
        <taxon>Muroidea</taxon>
        <taxon>Muridae</taxon>
        <taxon>Murinae</taxon>
        <taxon>Mus</taxon>
        <taxon>Mus</taxon>
    </lineage>
</organism>
<evidence type="ECO:0000250" key="1"/>
<evidence type="ECO:0000250" key="2">
    <source>
        <dbReference type="UniProtKB" id="Q9UKV0"/>
    </source>
</evidence>
<evidence type="ECO:0000256" key="3">
    <source>
        <dbReference type="SAM" id="MobiDB-lite"/>
    </source>
</evidence>
<evidence type="ECO:0000269" key="4">
    <source>
    </source>
</evidence>
<evidence type="ECO:0000269" key="5">
    <source>
    </source>
</evidence>
<evidence type="ECO:0000269" key="6">
    <source>
    </source>
</evidence>
<evidence type="ECO:0000269" key="7">
    <source>
    </source>
</evidence>
<evidence type="ECO:0000269" key="8">
    <source>
    </source>
</evidence>
<evidence type="ECO:0000269" key="9">
    <source>
    </source>
</evidence>
<evidence type="ECO:0000269" key="10">
    <source>
    </source>
</evidence>
<evidence type="ECO:0000269" key="11">
    <source>
    </source>
</evidence>
<evidence type="ECO:0000303" key="12">
    <source>
    </source>
</evidence>
<evidence type="ECO:0000303" key="13">
    <source ref="2"/>
</evidence>
<evidence type="ECO:0000305" key="14"/>
<evidence type="ECO:0007744" key="15">
    <source>
    </source>
</evidence>
<evidence type="ECO:0007829" key="16">
    <source>
        <dbReference type="PDB" id="1TQE"/>
    </source>
</evidence>
<proteinExistence type="evidence at protein level"/>
<reference key="1">
    <citation type="journal article" date="2001" name="J. Biol. Chem.">
        <title>Association of COOH-terminal-binding protein (CtBP) and MEF2-interacting transcription repressor (MITR) contributes to transcriptional repression of the MEF2 transcription factor.</title>
        <authorList>
            <person name="Zhang C.L."/>
            <person name="McKinsey T.A."/>
            <person name="Lu J.R."/>
            <person name="Olson E.N."/>
        </authorList>
    </citation>
    <scope>NUCLEOTIDE SEQUENCE [MRNA] (ISOFORM 3)</scope>
    <scope>HOMODIMERIZATION</scope>
    <scope>INTERACTION WITH CTBP1; HDAC1; HDAC3; HDAC4 AND HDAC5</scope>
    <scope>MUTAGENESIS OF 25-ASP-LEU-26</scope>
    <source>
        <strain>NIH Swiss</strain>
        <tissue>Embryonic heart</tissue>
    </source>
</reference>
<reference key="2">
    <citation type="submission" date="2000-02" db="EMBL/GenBank/DDBJ databases">
        <title>Cloning of the mouse HDRP cDNA.</title>
        <authorList>
            <person name="Zhou X."/>
            <person name="Richon V.M."/>
            <person name="Rifkind R.A."/>
            <person name="Marks P.A."/>
        </authorList>
    </citation>
    <scope>NUCLEOTIDE SEQUENCE [MRNA] (ISOFORMS 1 AND 2)</scope>
    <source>
        <strain>Swiss Webster / NIH</strain>
    </source>
</reference>
<reference key="3">
    <citation type="journal article" date="2004" name="Genome Res.">
        <title>The status, quality, and expansion of the NIH full-length cDNA project: the Mammalian Gene Collection (MGC).</title>
        <authorList>
            <consortium name="The MGC Project Team"/>
        </authorList>
    </citation>
    <scope>NUCLEOTIDE SEQUENCE [LARGE SCALE MRNA] (ISOFORM 1)</scope>
    <source>
        <strain>C57BL/6J</strain>
        <tissue>Retina</tissue>
    </source>
</reference>
<reference key="4">
    <citation type="journal article" date="2001" name="Proc. Natl. Acad. Sci. U.S.A.">
        <title>The transcriptional corepressor MITR is a signal-responsive inhibitor of myogenesis.</title>
        <authorList>
            <person name="Zhang C.L."/>
            <person name="McKinsey T.A."/>
            <person name="Olson E.N."/>
        </authorList>
    </citation>
    <scope>FUNCTION</scope>
    <scope>PHOSPHORYLATION AT SER-220 AND SER-450</scope>
    <scope>TISSUE SPECIFICITY</scope>
    <scope>DEVELOPMENTAL STAGE</scope>
    <scope>SUBCELLULAR LOCATION</scope>
</reference>
<reference key="5">
    <citation type="journal article" date="2002" name="Cell">
        <title>Class II histone deacetylases act as signal-responsive repressors of cardiac hypertrophy.</title>
        <authorList>
            <person name="Zhang C.L."/>
            <person name="McKinsey T.A."/>
            <person name="Chang S."/>
            <person name="Antos C.L."/>
            <person name="Hill J.A."/>
            <person name="Olson E.N."/>
        </authorList>
    </citation>
    <scope>PHOSPHORYLATION AT SER-220 AND SER-450</scope>
    <scope>FUNCTION</scope>
    <scope>DISRUPTION PHENOTYPE</scope>
</reference>
<reference key="6">
    <citation type="journal article" date="2005" name="J. Biol. Chem.">
        <title>Mirk/dyrk1B decreases the nuclear accumulation of class II histone deacetylases during skeletal muscle differentiation.</title>
        <authorList>
            <person name="Deng X."/>
            <person name="Ewton D.Z."/>
            <person name="Mercer S.E."/>
            <person name="Friedman E."/>
        </authorList>
    </citation>
    <scope>PHOSPHORYLATION AT SER-240</scope>
    <scope>SUBCELLULAR LOCATION</scope>
</reference>
<reference key="7">
    <citation type="journal article" date="2005" name="Nat. Neurosci.">
        <title>Histone deacetylase 9 couples neuronal activity to muscle chromatin acetylation and gene expression.</title>
        <authorList>
            <person name="Mejat A."/>
            <person name="Ramond F."/>
            <person name="Bassel-Duby R."/>
            <person name="Khochbin S."/>
            <person name="Olson E.N."/>
            <person name="Schaeffer L."/>
        </authorList>
    </citation>
    <scope>FUNCTION</scope>
    <scope>TISSUE SPECIFICITY</scope>
    <scope>DEVELOPMENTAL STAGE</scope>
    <scope>DOWN-REGULATION BY DENERVATION</scope>
    <scope>INTERACTION WITH HDAC1 AND HDAC3</scope>
    <scope>SUBCELLULAR LOCATION</scope>
</reference>
<reference key="8">
    <citation type="journal article" date="2006" name="Mol. Cell. Biol.">
        <title>Neuroprotection by histone deacetylase-related protein.</title>
        <authorList>
            <person name="Morrison B.E."/>
            <person name="Majdzadeh N."/>
            <person name="Zhang X."/>
            <person name="Lyles A."/>
            <person name="Bassel-Duby R."/>
            <person name="Olson E.N."/>
            <person name="D'Mello S.R."/>
        </authorList>
    </citation>
    <scope>DOWN-REGULATION BY NEURONAL APOPTOSIS</scope>
    <scope>FUNCTION</scope>
    <scope>INTERACTION WITH HDAC1 AND MAPK10</scope>
</reference>
<reference key="9">
    <citation type="journal article" date="2007" name="Mol. Cell. Biol.">
        <title>Regulation of HDAC9 gene expression by MEF2 establishes a negative-feedback loop in the transcriptional circuitry of muscle differentiation.</title>
        <authorList>
            <person name="Haberland M."/>
            <person name="Arnold M.A."/>
            <person name="McAnally J."/>
            <person name="Phan D."/>
            <person name="Kim Y."/>
            <person name="Olson E.N."/>
        </authorList>
    </citation>
    <scope>INDUCTION BY MEF2</scope>
    <scope>DEVELOPMENTAL STAGE</scope>
</reference>
<reference key="10">
    <citation type="journal article" date="2010" name="Cell">
        <title>A tissue-specific atlas of mouse protein phosphorylation and expression.</title>
        <authorList>
            <person name="Huttlin E.L."/>
            <person name="Jedrychowski M.P."/>
            <person name="Elias J.E."/>
            <person name="Goswami T."/>
            <person name="Rad R."/>
            <person name="Beausoleil S.A."/>
            <person name="Villen J."/>
            <person name="Haas W."/>
            <person name="Sowa M.E."/>
            <person name="Gygi S.P."/>
        </authorList>
    </citation>
    <scope>PHOSPHORYLATION [LARGE SCALE ANALYSIS] AT SER-552</scope>
    <scope>IDENTIFICATION BY MASS SPECTROMETRY [LARGE SCALE ANALYSIS]</scope>
    <source>
        <tissue>Brain</tissue>
    </source>
</reference>
<reference key="11">
    <citation type="journal article" date="2005" name="J. Mol. Biol.">
        <title>Mechanism of recruitment of class II histone deacetylases by myocyte enhancer factor-2.</title>
        <authorList>
            <person name="Han A."/>
            <person name="He J."/>
            <person name="Wu Y."/>
            <person name="Liu J.O."/>
            <person name="Chen L."/>
        </authorList>
    </citation>
    <scope>X-RAY CRYSTALLOGRAPHY (2.7 ANGSTROMS) OF 139-158 IN COMPLEX WITH MEF2 AND DNA</scope>
</reference>
<gene>
    <name type="primary">Hdac9</name>
    <name type="synonym">Hdac7b</name>
    <name type="synonym">Hdrp</name>
    <name type="synonym">Mitr</name>
</gene>
<name>HDAC9_MOUSE</name>
<comment type="function">
    <text evidence="5 6 9 10">Devoided of intrinsic deacetylase activity, promotes the deacetylation of lysine residues on the N-terminal part of the core histones (H2A, H2B, H3 and H4) by recruiting HDAC1 and HDAC3. Histone deacetylation gives a tag for epigenetic repression and plays an important role in transcriptional regulation, cell cycle progression and developmental events. Represses MEF2-dependent transcription, inhibits skeletal myogenesis and may be involved in heart development. Protects neurons from apoptosis, both by inhibiting JUN phosphorylation by MAPK10 and by repressing JUN transcription via HDAC1 recruitment to JUN promoter.</text>
</comment>
<comment type="catalytic activity">
    <reaction>
        <text>N(6)-acetyl-L-lysyl-[histone] + H2O = L-lysyl-[histone] + acetate</text>
        <dbReference type="Rhea" id="RHEA:58196"/>
        <dbReference type="Rhea" id="RHEA-COMP:9845"/>
        <dbReference type="Rhea" id="RHEA-COMP:11338"/>
        <dbReference type="ChEBI" id="CHEBI:15377"/>
        <dbReference type="ChEBI" id="CHEBI:29969"/>
        <dbReference type="ChEBI" id="CHEBI:30089"/>
        <dbReference type="ChEBI" id="CHEBI:61930"/>
        <dbReference type="EC" id="3.5.1.98"/>
    </reaction>
</comment>
<comment type="subunit">
    <text evidence="2 4 8 9 10">Homodimer. Interacts with ETV6 (By similarity). Interacts with MEF2, HDAC1, HDAC3, HDAC4, HDAC5, CTBP1 and MAPK10. The phosphorylated form interacts with 14-3-3. Interacts with FOXP3 in the absence of T-cell stimulation (By similarity).</text>
</comment>
<comment type="interaction">
    <interactant intactId="EBI-645361">
        <id>Q99N13</id>
    </interactant>
    <interactant intactId="EBI-1009256">
        <id>Q9Z2V5</id>
        <label>Hdac6</label>
    </interactant>
    <organismsDiffer>false</organismsDiffer>
    <experiments>2</experiments>
</comment>
<comment type="interaction">
    <interactant intactId="EBI-645361">
        <id>Q99N13</id>
    </interactant>
    <interactant intactId="EBI-309059">
        <id>P60335</id>
        <label>Pcbp1</label>
    </interactant>
    <organismsDiffer>false</organismsDiffer>
    <experiments>6</experiments>
</comment>
<comment type="interaction">
    <interactant intactId="EBI-645361">
        <id>Q99N13</id>
    </interactant>
    <interactant intactId="EBI-1210244">
        <id>Q3TKT4</id>
        <label>Smarca4</label>
    </interactant>
    <organismsDiffer>false</organismsDiffer>
    <experiments>3</experiments>
</comment>
<comment type="subcellular location">
    <subcellularLocation>
        <location evidence="5 7 9">Nucleus</location>
    </subcellularLocation>
</comment>
<comment type="alternative products">
    <event type="alternative splicing"/>
    <isoform>
        <id>Q99N13-1</id>
        <name>1</name>
        <sequence type="displayed"/>
    </isoform>
    <isoform>
        <id>Q99N13-2</id>
        <name>2</name>
        <name>Hdrpa</name>
        <sequence type="described" ref="VSP_023769"/>
    </isoform>
    <isoform>
        <id>Q99N13-3</id>
        <name>3</name>
        <sequence type="described" ref="VSP_029173"/>
    </isoform>
</comment>
<comment type="tissue specificity">
    <text evidence="5 9">Expressed at high levels in heart, brain and spleen. Expressed in skeletal muscle.</text>
</comment>
<comment type="developmental stage">
    <text evidence="5 9 11">At 10.5 dpc, expressed in heart, skeletal muscle and neural lineages. At 11.5d pc, expressed in heart, dorsal root ganglia and neural tube. At 12.5 dpc, expressed in heart, skeletal muscle, dorsal root ganglia, neural tube and retina. Strongly up-regulated in muscle between 14 and 19 dpc as a result of motor innervation.</text>
</comment>
<comment type="induction">
    <text evidence="11">By MEF2 during muscle differentiation. Down-regulated by muscle denervation. Down-regulated by trichostatin A or sodium butyrate, and during neuronal apoptosis (at protein level).</text>
</comment>
<comment type="PTM">
    <text evidence="1">Sumoylated.</text>
</comment>
<comment type="PTM">
    <text evidence="5 6 7">Phosphorylated on Ser-220 and Ser-450; which promotes 14-3-3-binding, impairs interaction with MEF2, and antagonizes antimyogenic activity. Phosphorylated on Ser-240 by DYRK1B; which impairs nuclear accumulation. Phosphorylated by the PKC kinases PKN1 and PKN2, impairing nuclear import.</text>
</comment>
<comment type="disruption phenotype">
    <text evidence="6">Mice do not present any abnormality at early age but develop cardiac hypertrophy by eight months of age.</text>
</comment>
<comment type="similarity">
    <text evidence="14">Belongs to the histone deacetylase family. HD type 2 subfamily.</text>
</comment>
<sequence>MHSMISSVDVKSEVPMGLEPISPLDLRTDLRMMMPVVDPVVREKQLQQELLLIQQQQQIQKQLLIAEFQKQHENLTRQHQAQLQEHIKELLAIKQQQELLEKEQKLEQQRQEQEVERHRREQQLPPLRGKDRGRERAVASTEVKQKLQEFLLSKSATKDTPTNGKNHSVGRHPKLWYTAAHHTSLDQSSPPLSGTSPSYKYTLPGAQDSKDDFPLRKTASEPNLKVRSRLKQKVAERRSSPLLRRKDGNLVTSFKKRVFEVAESSVSSSSPGSGPSSPNNGPAGNVTENEASALPPTPHPEQLVPQQRILIHEDSMNLLSLYTSPSLPNITLGLPAVPSPLNASNSLKDKQKCETQMLRQGVPLPSQYGSSIAASSSHVHVAMEGKPNSSHQALLQHLLLKEQMRQQKLLVAGGVPLHPQSPLATKERISPGIRGTHKLPRHRPLNRTQSAPLPQSTLAQLVIQQQHQQFLEKQKQYQQQIHMNKLLSKSIEQLKQPGSHLEEAEEELQGDQSMEDRAASKDNSARSDSSACVEDTLGQVGAVKVKEEPVDSDEDAQIQEMECGEQAAFMQQVIGKDLAPGFVIKVII</sequence>
<keyword id="KW-0002">3D-structure</keyword>
<keyword id="KW-0025">Alternative splicing</keyword>
<keyword id="KW-0156">Chromatin regulator</keyword>
<keyword id="KW-0378">Hydrolase</keyword>
<keyword id="KW-0539">Nucleus</keyword>
<keyword id="KW-0597">Phosphoprotein</keyword>
<keyword id="KW-1185">Reference proteome</keyword>
<keyword id="KW-0678">Repressor</keyword>
<keyword id="KW-0804">Transcription</keyword>
<keyword id="KW-0805">Transcription regulation</keyword>
<keyword id="KW-0832">Ubl conjugation</keyword>
<feature type="chain" id="PRO_0000114711" description="Histone deacetylase 9">
    <location>
        <begin position="1"/>
        <end position="588"/>
    </location>
</feature>
<feature type="region of interest" description="Interaction with CTBP1" evidence="4">
    <location>
        <begin position="23"/>
        <end position="27"/>
    </location>
</feature>
<feature type="region of interest" description="Disordered" evidence="3">
    <location>
        <begin position="110"/>
        <end position="170"/>
    </location>
</feature>
<feature type="region of interest" description="Interaction with MEF2">
    <location>
        <begin position="136"/>
        <end position="154"/>
    </location>
</feature>
<feature type="region of interest" description="Interaction with MAPK10" evidence="10">
    <location>
        <begin position="175"/>
        <end position="343"/>
    </location>
</feature>
<feature type="region of interest" description="Disordered" evidence="3">
    <location>
        <begin position="183"/>
        <end position="242"/>
    </location>
</feature>
<feature type="region of interest" description="Interaction with ETV6" evidence="1">
    <location>
        <begin position="218"/>
        <end position="261"/>
    </location>
</feature>
<feature type="region of interest" description="Disordered" evidence="3">
    <location>
        <begin position="264"/>
        <end position="301"/>
    </location>
</feature>
<feature type="region of interest" description="Disordered" evidence="3">
    <location>
        <begin position="493"/>
        <end position="533"/>
    </location>
</feature>
<feature type="compositionally biased region" description="Basic and acidic residues" evidence="3">
    <location>
        <begin position="110"/>
        <end position="147"/>
    </location>
</feature>
<feature type="compositionally biased region" description="Polar residues" evidence="3">
    <location>
        <begin position="154"/>
        <end position="166"/>
    </location>
</feature>
<feature type="compositionally biased region" description="Polar residues" evidence="3">
    <location>
        <begin position="185"/>
        <end position="199"/>
    </location>
</feature>
<feature type="compositionally biased region" description="Basic and acidic residues" evidence="3">
    <location>
        <begin position="208"/>
        <end position="219"/>
    </location>
</feature>
<feature type="compositionally biased region" description="Basic and acidic residues" evidence="3">
    <location>
        <begin position="233"/>
        <end position="242"/>
    </location>
</feature>
<feature type="compositionally biased region" description="Low complexity" evidence="3">
    <location>
        <begin position="264"/>
        <end position="284"/>
    </location>
</feature>
<feature type="compositionally biased region" description="Basic and acidic residues" evidence="3">
    <location>
        <begin position="514"/>
        <end position="525"/>
    </location>
</feature>
<feature type="modified residue" description="Phosphoserine" evidence="2">
    <location>
        <position position="22"/>
    </location>
</feature>
<feature type="modified residue" description="Phosphoserine" evidence="5 6">
    <location>
        <position position="220"/>
    </location>
</feature>
<feature type="modified residue" description="Phosphoserine; by DYRK1B" evidence="7">
    <location>
        <position position="240"/>
    </location>
</feature>
<feature type="modified residue" description="Phosphoserine" evidence="5 6">
    <location>
        <position position="450"/>
    </location>
</feature>
<feature type="modified residue" description="Phosphoserine" evidence="15">
    <location>
        <position position="552"/>
    </location>
</feature>
<feature type="splice variant" id="VSP_029173" description="In isoform 3." evidence="12">
    <location>
        <begin position="177"/>
        <end position="178"/>
    </location>
</feature>
<feature type="splice variant" id="VSP_023769" description="In isoform 2." evidence="13">
    <location>
        <begin position="219"/>
        <end position="262"/>
    </location>
</feature>
<feature type="mutagenesis site" description="Abolishes binding to CTBP1 and impairs function in transcription repression." evidence="4">
    <original>DL</original>
    <variation>AS</variation>
    <location>
        <begin position="25"/>
        <end position="26"/>
    </location>
</feature>
<feature type="sequence conflict" description="In Ref. 2; AAK15027/AAL86358." evidence="14" ref="2">
    <original>R</original>
    <variation>K</variation>
    <location>
        <position position="120"/>
    </location>
</feature>
<feature type="sequence conflict" description="In Ref. 2; AAK15027/AAL86358." evidence="14" ref="2">
    <original>R</original>
    <variation>K</variation>
    <location>
        <position position="136"/>
    </location>
</feature>
<feature type="sequence conflict" description="In Ref. 3; AAH98187." evidence="14" ref="3">
    <original>N</original>
    <variation>T</variation>
    <location>
        <position position="388"/>
    </location>
</feature>
<feature type="sequence conflict" description="In Ref. 1; AAG48332." evidence="14" ref="1">
    <original>N</original>
    <variation>T</variation>
    <location>
        <position position="523"/>
    </location>
</feature>
<feature type="helix" evidence="16">
    <location>
        <begin position="143"/>
        <end position="153"/>
    </location>
</feature>
<accession>Q99N13</accession>
<accession>Q4QQN7</accession>
<accession>Q8R4Y6</accession>
<accession>Q9EPT2</accession>